<dbReference type="EC" id="4.2.1.9" evidence="1"/>
<dbReference type="EMBL" id="CP000720">
    <property type="protein sequence ID" value="ABS45812.1"/>
    <property type="molecule type" value="Genomic_DNA"/>
</dbReference>
<dbReference type="RefSeq" id="WP_012104289.1">
    <property type="nucleotide sequence ID" value="NC_009708.1"/>
</dbReference>
<dbReference type="SMR" id="A7FD26"/>
<dbReference type="KEGG" id="ypi:YpsIP31758_0157"/>
<dbReference type="HOGENOM" id="CLU_014271_4_2_6"/>
<dbReference type="UniPathway" id="UPA00047">
    <property type="reaction ID" value="UER00057"/>
</dbReference>
<dbReference type="UniPathway" id="UPA00049">
    <property type="reaction ID" value="UER00061"/>
</dbReference>
<dbReference type="Proteomes" id="UP000002412">
    <property type="component" value="Chromosome"/>
</dbReference>
<dbReference type="GO" id="GO:0005829">
    <property type="term" value="C:cytosol"/>
    <property type="evidence" value="ECO:0007669"/>
    <property type="project" value="TreeGrafter"/>
</dbReference>
<dbReference type="GO" id="GO:0051537">
    <property type="term" value="F:2 iron, 2 sulfur cluster binding"/>
    <property type="evidence" value="ECO:0007669"/>
    <property type="project" value="UniProtKB-UniRule"/>
</dbReference>
<dbReference type="GO" id="GO:0004160">
    <property type="term" value="F:dihydroxy-acid dehydratase activity"/>
    <property type="evidence" value="ECO:0007669"/>
    <property type="project" value="UniProtKB-UniRule"/>
</dbReference>
<dbReference type="GO" id="GO:0000287">
    <property type="term" value="F:magnesium ion binding"/>
    <property type="evidence" value="ECO:0007669"/>
    <property type="project" value="UniProtKB-UniRule"/>
</dbReference>
<dbReference type="GO" id="GO:0009097">
    <property type="term" value="P:isoleucine biosynthetic process"/>
    <property type="evidence" value="ECO:0007669"/>
    <property type="project" value="UniProtKB-UniRule"/>
</dbReference>
<dbReference type="GO" id="GO:0009099">
    <property type="term" value="P:L-valine biosynthetic process"/>
    <property type="evidence" value="ECO:0007669"/>
    <property type="project" value="UniProtKB-UniRule"/>
</dbReference>
<dbReference type="FunFam" id="3.50.30.80:FF:000001">
    <property type="entry name" value="Dihydroxy-acid dehydratase"/>
    <property type="match status" value="1"/>
</dbReference>
<dbReference type="Gene3D" id="3.50.30.80">
    <property type="entry name" value="IlvD/EDD C-terminal domain-like"/>
    <property type="match status" value="1"/>
</dbReference>
<dbReference type="HAMAP" id="MF_00012">
    <property type="entry name" value="IlvD"/>
    <property type="match status" value="1"/>
</dbReference>
<dbReference type="InterPro" id="IPR042096">
    <property type="entry name" value="Dihydro-acid_dehy_C"/>
</dbReference>
<dbReference type="InterPro" id="IPR004404">
    <property type="entry name" value="DihydroxyA_deHydtase"/>
</dbReference>
<dbReference type="InterPro" id="IPR020558">
    <property type="entry name" value="DiOHA_6PGluconate_deHydtase_CS"/>
</dbReference>
<dbReference type="InterPro" id="IPR056740">
    <property type="entry name" value="ILV_EDD_C"/>
</dbReference>
<dbReference type="InterPro" id="IPR000581">
    <property type="entry name" value="ILV_EDD_N"/>
</dbReference>
<dbReference type="InterPro" id="IPR037237">
    <property type="entry name" value="IlvD/EDD_N"/>
</dbReference>
<dbReference type="NCBIfam" id="TIGR00110">
    <property type="entry name" value="ilvD"/>
    <property type="match status" value="1"/>
</dbReference>
<dbReference type="NCBIfam" id="NF009103">
    <property type="entry name" value="PRK12448.1"/>
    <property type="match status" value="1"/>
</dbReference>
<dbReference type="PANTHER" id="PTHR43661">
    <property type="entry name" value="D-XYLONATE DEHYDRATASE"/>
    <property type="match status" value="1"/>
</dbReference>
<dbReference type="PANTHER" id="PTHR43661:SF3">
    <property type="entry name" value="D-XYLONATE DEHYDRATASE YAGF-RELATED"/>
    <property type="match status" value="1"/>
</dbReference>
<dbReference type="Pfam" id="PF24877">
    <property type="entry name" value="ILV_EDD_C"/>
    <property type="match status" value="1"/>
</dbReference>
<dbReference type="Pfam" id="PF00920">
    <property type="entry name" value="ILVD_EDD_N"/>
    <property type="match status" value="1"/>
</dbReference>
<dbReference type="SUPFAM" id="SSF143975">
    <property type="entry name" value="IlvD/EDD N-terminal domain-like"/>
    <property type="match status" value="1"/>
</dbReference>
<dbReference type="SUPFAM" id="SSF52016">
    <property type="entry name" value="LeuD/IlvD-like"/>
    <property type="match status" value="1"/>
</dbReference>
<dbReference type="PROSITE" id="PS00886">
    <property type="entry name" value="ILVD_EDD_1"/>
    <property type="match status" value="1"/>
</dbReference>
<dbReference type="PROSITE" id="PS00887">
    <property type="entry name" value="ILVD_EDD_2"/>
    <property type="match status" value="1"/>
</dbReference>
<evidence type="ECO:0000255" key="1">
    <source>
        <dbReference type="HAMAP-Rule" id="MF_00012"/>
    </source>
</evidence>
<proteinExistence type="inferred from homology"/>
<comment type="function">
    <text evidence="1">Functions in the biosynthesis of branched-chain amino acids. Catalyzes the dehydration of (2R,3R)-2,3-dihydroxy-3-methylpentanoate (2,3-dihydroxy-3-methylvalerate) into 2-oxo-3-methylpentanoate (2-oxo-3-methylvalerate) and of (2R)-2,3-dihydroxy-3-methylbutanoate (2,3-dihydroxyisovalerate) into 2-oxo-3-methylbutanoate (2-oxoisovalerate), the penultimate precursor to L-isoleucine and L-valine, respectively.</text>
</comment>
<comment type="catalytic activity">
    <reaction evidence="1">
        <text>(2R)-2,3-dihydroxy-3-methylbutanoate = 3-methyl-2-oxobutanoate + H2O</text>
        <dbReference type="Rhea" id="RHEA:24809"/>
        <dbReference type="ChEBI" id="CHEBI:11851"/>
        <dbReference type="ChEBI" id="CHEBI:15377"/>
        <dbReference type="ChEBI" id="CHEBI:49072"/>
        <dbReference type="EC" id="4.2.1.9"/>
    </reaction>
    <physiologicalReaction direction="left-to-right" evidence="1">
        <dbReference type="Rhea" id="RHEA:24810"/>
    </physiologicalReaction>
</comment>
<comment type="catalytic activity">
    <reaction evidence="1">
        <text>(2R,3R)-2,3-dihydroxy-3-methylpentanoate = (S)-3-methyl-2-oxopentanoate + H2O</text>
        <dbReference type="Rhea" id="RHEA:27694"/>
        <dbReference type="ChEBI" id="CHEBI:15377"/>
        <dbReference type="ChEBI" id="CHEBI:35146"/>
        <dbReference type="ChEBI" id="CHEBI:49258"/>
        <dbReference type="EC" id="4.2.1.9"/>
    </reaction>
    <physiologicalReaction direction="left-to-right" evidence="1">
        <dbReference type="Rhea" id="RHEA:27695"/>
    </physiologicalReaction>
</comment>
<comment type="cofactor">
    <cofactor evidence="1">
        <name>[2Fe-2S] cluster</name>
        <dbReference type="ChEBI" id="CHEBI:190135"/>
    </cofactor>
    <text evidence="1">Binds 1 [2Fe-2S] cluster per subunit. This cluster acts as a Lewis acid cofactor.</text>
</comment>
<comment type="cofactor">
    <cofactor evidence="1">
        <name>Mg(2+)</name>
        <dbReference type="ChEBI" id="CHEBI:18420"/>
    </cofactor>
</comment>
<comment type="pathway">
    <text evidence="1">Amino-acid biosynthesis; L-isoleucine biosynthesis; L-isoleucine from 2-oxobutanoate: step 3/4.</text>
</comment>
<comment type="pathway">
    <text evidence="1">Amino-acid biosynthesis; L-valine biosynthesis; L-valine from pyruvate: step 3/4.</text>
</comment>
<comment type="subunit">
    <text evidence="1">Homodimer.</text>
</comment>
<comment type="similarity">
    <text evidence="1">Belongs to the IlvD/Edd family.</text>
</comment>
<gene>
    <name evidence="1" type="primary">ilvD</name>
    <name type="ordered locus">YpsIP31758_0157</name>
</gene>
<feature type="chain" id="PRO_1000057100" description="Dihydroxy-acid dehydratase">
    <location>
        <begin position="1"/>
        <end position="616"/>
    </location>
</feature>
<feature type="active site" description="Proton acceptor" evidence="1">
    <location>
        <position position="517"/>
    </location>
</feature>
<feature type="binding site" evidence="1">
    <location>
        <position position="81"/>
    </location>
    <ligand>
        <name>Mg(2+)</name>
        <dbReference type="ChEBI" id="CHEBI:18420"/>
    </ligand>
</feature>
<feature type="binding site" evidence="1">
    <location>
        <position position="122"/>
    </location>
    <ligand>
        <name>[2Fe-2S] cluster</name>
        <dbReference type="ChEBI" id="CHEBI:190135"/>
    </ligand>
</feature>
<feature type="binding site" evidence="1">
    <location>
        <position position="123"/>
    </location>
    <ligand>
        <name>Mg(2+)</name>
        <dbReference type="ChEBI" id="CHEBI:18420"/>
    </ligand>
</feature>
<feature type="binding site" description="via carbamate group" evidence="1">
    <location>
        <position position="124"/>
    </location>
    <ligand>
        <name>Mg(2+)</name>
        <dbReference type="ChEBI" id="CHEBI:18420"/>
    </ligand>
</feature>
<feature type="binding site" evidence="1">
    <location>
        <position position="195"/>
    </location>
    <ligand>
        <name>[2Fe-2S] cluster</name>
        <dbReference type="ChEBI" id="CHEBI:190135"/>
    </ligand>
</feature>
<feature type="binding site" evidence="1">
    <location>
        <position position="491"/>
    </location>
    <ligand>
        <name>Mg(2+)</name>
        <dbReference type="ChEBI" id="CHEBI:18420"/>
    </ligand>
</feature>
<feature type="modified residue" description="N6-carboxylysine" evidence="1">
    <location>
        <position position="124"/>
    </location>
</feature>
<reference key="1">
    <citation type="journal article" date="2007" name="PLoS Genet.">
        <title>The complete genome sequence of Yersinia pseudotuberculosis IP31758, the causative agent of Far East scarlet-like fever.</title>
        <authorList>
            <person name="Eppinger M."/>
            <person name="Rosovitz M.J."/>
            <person name="Fricke W.F."/>
            <person name="Rasko D.A."/>
            <person name="Kokorina G."/>
            <person name="Fayolle C."/>
            <person name="Lindler L.E."/>
            <person name="Carniel E."/>
            <person name="Ravel J."/>
        </authorList>
    </citation>
    <scope>NUCLEOTIDE SEQUENCE [LARGE SCALE GENOMIC DNA]</scope>
    <source>
        <strain>IP 31758</strain>
    </source>
</reference>
<protein>
    <recommendedName>
        <fullName evidence="1">Dihydroxy-acid dehydratase</fullName>
        <shortName evidence="1">DAD</shortName>
        <ecNumber evidence="1">4.2.1.9</ecNumber>
    </recommendedName>
</protein>
<name>ILVD_YERP3</name>
<keyword id="KW-0001">2Fe-2S</keyword>
<keyword id="KW-0028">Amino-acid biosynthesis</keyword>
<keyword id="KW-0100">Branched-chain amino acid biosynthesis</keyword>
<keyword id="KW-0408">Iron</keyword>
<keyword id="KW-0411">Iron-sulfur</keyword>
<keyword id="KW-0456">Lyase</keyword>
<keyword id="KW-0460">Magnesium</keyword>
<keyword id="KW-0479">Metal-binding</keyword>
<accession>A7FD26</accession>
<organism>
    <name type="scientific">Yersinia pseudotuberculosis serotype O:1b (strain IP 31758)</name>
    <dbReference type="NCBI Taxonomy" id="349747"/>
    <lineage>
        <taxon>Bacteria</taxon>
        <taxon>Pseudomonadati</taxon>
        <taxon>Pseudomonadota</taxon>
        <taxon>Gammaproteobacteria</taxon>
        <taxon>Enterobacterales</taxon>
        <taxon>Yersiniaceae</taxon>
        <taxon>Yersinia</taxon>
    </lineage>
</organism>
<sequence length="616" mass="65518">MPKYRSHTTTHGRNMAGARALWRATGMTDDDFGKPIIAVVNSFTQFVPGHVHLRDLGKLVAEQIVASGGVAKEFNTIAVDDGIAMGHGGMLYSLPSRELIADSVEYMVNAHCADAMVCISNCDKITPGMLMASLRLNIPVIFVSGGPMEAGKTKLSDKIIKLDLIDAMIQGANPNVSDEESAQIERSACPTCGSCSGMFTANSMNCLNEALGLALPGNGSLLATHADRKQLFLDAGKHIVALTKRYYEQDDVSALPRNIANKAAFENAMILDIAMGGSTNTVLHLLAAAQEGEIDFSMTDIDRLSRKVPHLCKVAPSTQKYHMEDVHRAGGVIGILGELDRAGLLNRDVSNVLGLNLTQTLEAYDVMLTQDEGVKQMYAAGPAGIRTTKAFSQDCRYPSLDTDREEGCIRTREHAYSQDGGLAVLYGNIAADGCIVKTAGVDKDSLTFRGPAKVFESQDEAVEAILGGKVVAGDVVVIRYEGPKGGPGMQEMLYPTTYLKSMGLGKSCALLTDGRFSGGTSGLSIGHVSPEAASGGLIGLVQDGDFINIDIPNRGIVLDVSEAELAARRETEEAHGDAAWSPKGRERQVSYALRAYAMLATSADKGAVRDKSKLGG</sequence>